<feature type="chain" id="PRO_1000054468" description="Large ribosomal subunit protein uL15">
    <location>
        <begin position="1"/>
        <end position="150"/>
    </location>
</feature>
<feature type="region of interest" description="Disordered" evidence="2">
    <location>
        <begin position="1"/>
        <end position="52"/>
    </location>
</feature>
<feature type="compositionally biased region" description="Gly residues" evidence="2">
    <location>
        <begin position="23"/>
        <end position="32"/>
    </location>
</feature>
<sequence>MDLSNLKPAEGSVRKNSKRIGRGEGSGKGGTATRGHKGAKSRSGYSKKIGFEGGQMPLQRRVPKFGFTNRNRKVYQGINLDTLQNLVDEGRIKDTVDMDVLVENGLAGRNELVKILGRGELKAKLKISVHKFTASAKEAIEAAGGEVVTL</sequence>
<dbReference type="EMBL" id="CU207366">
    <property type="protein sequence ID" value="CAL67774.1"/>
    <property type="molecule type" value="Genomic_DNA"/>
</dbReference>
<dbReference type="RefSeq" id="WP_011710677.1">
    <property type="nucleotide sequence ID" value="NC_008571.1"/>
</dbReference>
<dbReference type="SMR" id="A0M579"/>
<dbReference type="STRING" id="411154.GFO_2820"/>
<dbReference type="KEGG" id="gfo:GFO_2820"/>
<dbReference type="eggNOG" id="COG0200">
    <property type="taxonomic scope" value="Bacteria"/>
</dbReference>
<dbReference type="HOGENOM" id="CLU_055188_4_0_10"/>
<dbReference type="OrthoDB" id="9810293at2"/>
<dbReference type="Proteomes" id="UP000000755">
    <property type="component" value="Chromosome"/>
</dbReference>
<dbReference type="GO" id="GO:0022625">
    <property type="term" value="C:cytosolic large ribosomal subunit"/>
    <property type="evidence" value="ECO:0007669"/>
    <property type="project" value="TreeGrafter"/>
</dbReference>
<dbReference type="GO" id="GO:0019843">
    <property type="term" value="F:rRNA binding"/>
    <property type="evidence" value="ECO:0007669"/>
    <property type="project" value="UniProtKB-UniRule"/>
</dbReference>
<dbReference type="GO" id="GO:0003735">
    <property type="term" value="F:structural constituent of ribosome"/>
    <property type="evidence" value="ECO:0007669"/>
    <property type="project" value="InterPro"/>
</dbReference>
<dbReference type="GO" id="GO:0006412">
    <property type="term" value="P:translation"/>
    <property type="evidence" value="ECO:0007669"/>
    <property type="project" value="UniProtKB-UniRule"/>
</dbReference>
<dbReference type="Gene3D" id="3.100.10.10">
    <property type="match status" value="1"/>
</dbReference>
<dbReference type="HAMAP" id="MF_01341">
    <property type="entry name" value="Ribosomal_uL15"/>
    <property type="match status" value="1"/>
</dbReference>
<dbReference type="InterPro" id="IPR030878">
    <property type="entry name" value="Ribosomal_uL15"/>
</dbReference>
<dbReference type="InterPro" id="IPR021131">
    <property type="entry name" value="Ribosomal_uL15/eL18"/>
</dbReference>
<dbReference type="InterPro" id="IPR036227">
    <property type="entry name" value="Ribosomal_uL15/eL18_sf"/>
</dbReference>
<dbReference type="InterPro" id="IPR005749">
    <property type="entry name" value="Ribosomal_uL15_bac-type"/>
</dbReference>
<dbReference type="InterPro" id="IPR001196">
    <property type="entry name" value="Ribosomal_uL15_CS"/>
</dbReference>
<dbReference type="NCBIfam" id="TIGR01071">
    <property type="entry name" value="rplO_bact"/>
    <property type="match status" value="1"/>
</dbReference>
<dbReference type="PANTHER" id="PTHR12934">
    <property type="entry name" value="50S RIBOSOMAL PROTEIN L15"/>
    <property type="match status" value="1"/>
</dbReference>
<dbReference type="PANTHER" id="PTHR12934:SF11">
    <property type="entry name" value="LARGE RIBOSOMAL SUBUNIT PROTEIN UL15M"/>
    <property type="match status" value="1"/>
</dbReference>
<dbReference type="Pfam" id="PF00828">
    <property type="entry name" value="Ribosomal_L27A"/>
    <property type="match status" value="1"/>
</dbReference>
<dbReference type="SUPFAM" id="SSF52080">
    <property type="entry name" value="Ribosomal proteins L15p and L18e"/>
    <property type="match status" value="1"/>
</dbReference>
<dbReference type="PROSITE" id="PS00475">
    <property type="entry name" value="RIBOSOMAL_L15"/>
    <property type="match status" value="1"/>
</dbReference>
<name>RL15_CHRFK</name>
<accession>A0M579</accession>
<organism>
    <name type="scientific">Christiangramia forsetii (strain DSM 17595 / CGMCC 1.15422 / KT0803)</name>
    <name type="common">Gramella forsetii</name>
    <dbReference type="NCBI Taxonomy" id="411154"/>
    <lineage>
        <taxon>Bacteria</taxon>
        <taxon>Pseudomonadati</taxon>
        <taxon>Bacteroidota</taxon>
        <taxon>Flavobacteriia</taxon>
        <taxon>Flavobacteriales</taxon>
        <taxon>Flavobacteriaceae</taxon>
        <taxon>Christiangramia</taxon>
    </lineage>
</organism>
<comment type="function">
    <text evidence="1">Binds to the 23S rRNA.</text>
</comment>
<comment type="subunit">
    <text evidence="1">Part of the 50S ribosomal subunit.</text>
</comment>
<comment type="similarity">
    <text evidence="1">Belongs to the universal ribosomal protein uL15 family.</text>
</comment>
<protein>
    <recommendedName>
        <fullName evidence="1">Large ribosomal subunit protein uL15</fullName>
    </recommendedName>
    <alternativeName>
        <fullName evidence="3">50S ribosomal protein L15</fullName>
    </alternativeName>
</protein>
<evidence type="ECO:0000255" key="1">
    <source>
        <dbReference type="HAMAP-Rule" id="MF_01341"/>
    </source>
</evidence>
<evidence type="ECO:0000256" key="2">
    <source>
        <dbReference type="SAM" id="MobiDB-lite"/>
    </source>
</evidence>
<evidence type="ECO:0000305" key="3"/>
<reference key="1">
    <citation type="journal article" date="2006" name="Environ. Microbiol.">
        <title>Whole genome analysis of the marine Bacteroidetes'Gramella forsetii' reveals adaptations to degradation of polymeric organic matter.</title>
        <authorList>
            <person name="Bauer M."/>
            <person name="Kube M."/>
            <person name="Teeling H."/>
            <person name="Richter M."/>
            <person name="Lombardot T."/>
            <person name="Allers E."/>
            <person name="Wuerdemann C.A."/>
            <person name="Quast C."/>
            <person name="Kuhl H."/>
            <person name="Knaust F."/>
            <person name="Woebken D."/>
            <person name="Bischof K."/>
            <person name="Mussmann M."/>
            <person name="Choudhuri J.V."/>
            <person name="Meyer F."/>
            <person name="Reinhardt R."/>
            <person name="Amann R.I."/>
            <person name="Gloeckner F.O."/>
        </authorList>
    </citation>
    <scope>NUCLEOTIDE SEQUENCE [LARGE SCALE GENOMIC DNA]</scope>
    <source>
        <strain>DSM 17595 / CGMCC 1.15422 / KT0803</strain>
    </source>
</reference>
<proteinExistence type="inferred from homology"/>
<keyword id="KW-0687">Ribonucleoprotein</keyword>
<keyword id="KW-0689">Ribosomal protein</keyword>
<keyword id="KW-0694">RNA-binding</keyword>
<keyword id="KW-0699">rRNA-binding</keyword>
<gene>
    <name evidence="1" type="primary">rplO</name>
    <name type="ordered locus">GFO_2820</name>
</gene>